<reference key="1">
    <citation type="journal article" date="2008" name="Chem. Biol. Interact.">
        <title>Extending the Bacillus cereus group genomics to putative food-borne pathogens of different toxicity.</title>
        <authorList>
            <person name="Lapidus A."/>
            <person name="Goltsman E."/>
            <person name="Auger S."/>
            <person name="Galleron N."/>
            <person name="Segurens B."/>
            <person name="Dossat C."/>
            <person name="Land M.L."/>
            <person name="Broussolle V."/>
            <person name="Brillard J."/>
            <person name="Guinebretiere M.-H."/>
            <person name="Sanchis V."/>
            <person name="Nguen-the C."/>
            <person name="Lereclus D."/>
            <person name="Richardson P."/>
            <person name="Wincker P."/>
            <person name="Weissenbach J."/>
            <person name="Ehrlich S.D."/>
            <person name="Sorokin A."/>
        </authorList>
    </citation>
    <scope>NUCLEOTIDE SEQUENCE [LARGE SCALE GENOMIC DNA]</scope>
    <source>
        <strain>DSM 22905 / CIP 110041 / 391-98 / NVH 391-98</strain>
    </source>
</reference>
<dbReference type="EC" id="2.5.1.145" evidence="1"/>
<dbReference type="EMBL" id="CP000764">
    <property type="protein sequence ID" value="ABS23902.1"/>
    <property type="molecule type" value="Genomic_DNA"/>
</dbReference>
<dbReference type="RefSeq" id="WP_012096159.1">
    <property type="nucleotide sequence ID" value="NC_009674.1"/>
</dbReference>
<dbReference type="SMR" id="A7GUU4"/>
<dbReference type="STRING" id="315749.Bcer98_3705"/>
<dbReference type="GeneID" id="33898952"/>
<dbReference type="KEGG" id="bcy:Bcer98_3705"/>
<dbReference type="eggNOG" id="COG0682">
    <property type="taxonomic scope" value="Bacteria"/>
</dbReference>
<dbReference type="HOGENOM" id="CLU_013386_0_1_9"/>
<dbReference type="OrthoDB" id="871140at2"/>
<dbReference type="UniPathway" id="UPA00664"/>
<dbReference type="Proteomes" id="UP000002300">
    <property type="component" value="Chromosome"/>
</dbReference>
<dbReference type="GO" id="GO:0005886">
    <property type="term" value="C:plasma membrane"/>
    <property type="evidence" value="ECO:0007669"/>
    <property type="project" value="UniProtKB-SubCell"/>
</dbReference>
<dbReference type="GO" id="GO:0008961">
    <property type="term" value="F:phosphatidylglycerol-prolipoprotein diacylglyceryl transferase activity"/>
    <property type="evidence" value="ECO:0007669"/>
    <property type="project" value="UniProtKB-UniRule"/>
</dbReference>
<dbReference type="GO" id="GO:0042158">
    <property type="term" value="P:lipoprotein biosynthetic process"/>
    <property type="evidence" value="ECO:0007669"/>
    <property type="project" value="UniProtKB-UniRule"/>
</dbReference>
<dbReference type="HAMAP" id="MF_01147">
    <property type="entry name" value="Lgt"/>
    <property type="match status" value="1"/>
</dbReference>
<dbReference type="InterPro" id="IPR001640">
    <property type="entry name" value="Lgt"/>
</dbReference>
<dbReference type="NCBIfam" id="TIGR00544">
    <property type="entry name" value="lgt"/>
    <property type="match status" value="1"/>
</dbReference>
<dbReference type="PANTHER" id="PTHR30589:SF0">
    <property type="entry name" value="PHOSPHATIDYLGLYCEROL--PROLIPOPROTEIN DIACYLGLYCERYL TRANSFERASE"/>
    <property type="match status" value="1"/>
</dbReference>
<dbReference type="PANTHER" id="PTHR30589">
    <property type="entry name" value="PROLIPOPROTEIN DIACYLGLYCERYL TRANSFERASE"/>
    <property type="match status" value="1"/>
</dbReference>
<dbReference type="Pfam" id="PF01790">
    <property type="entry name" value="LGT"/>
    <property type="match status" value="1"/>
</dbReference>
<dbReference type="PROSITE" id="PS01311">
    <property type="entry name" value="LGT"/>
    <property type="match status" value="1"/>
</dbReference>
<feature type="chain" id="PRO_1000085066" description="Phosphatidylglycerol--prolipoprotein diacylglyceryl transferase">
    <location>
        <begin position="1"/>
        <end position="270"/>
    </location>
</feature>
<feature type="transmembrane region" description="Helical" evidence="1">
    <location>
        <begin position="19"/>
        <end position="39"/>
    </location>
</feature>
<feature type="transmembrane region" description="Helical" evidence="1">
    <location>
        <begin position="53"/>
        <end position="73"/>
    </location>
</feature>
<feature type="transmembrane region" description="Helical" evidence="1">
    <location>
        <begin position="92"/>
        <end position="112"/>
    </location>
</feature>
<feature type="transmembrane region" description="Helical" evidence="1">
    <location>
        <begin position="117"/>
        <end position="137"/>
    </location>
</feature>
<feature type="transmembrane region" description="Helical" evidence="1">
    <location>
        <begin position="178"/>
        <end position="198"/>
    </location>
</feature>
<feature type="transmembrane region" description="Helical" evidence="1">
    <location>
        <begin position="206"/>
        <end position="226"/>
    </location>
</feature>
<feature type="transmembrane region" description="Helical" evidence="1">
    <location>
        <begin position="236"/>
        <end position="256"/>
    </location>
</feature>
<feature type="binding site" evidence="1">
    <location>
        <position position="138"/>
    </location>
    <ligand>
        <name>a 1,2-diacyl-sn-glycero-3-phospho-(1'-sn-glycerol)</name>
        <dbReference type="ChEBI" id="CHEBI:64716"/>
    </ligand>
</feature>
<accession>A7GUU4</accession>
<organism>
    <name type="scientific">Bacillus cytotoxicus (strain DSM 22905 / CIP 110041 / 391-98 / NVH 391-98)</name>
    <dbReference type="NCBI Taxonomy" id="315749"/>
    <lineage>
        <taxon>Bacteria</taxon>
        <taxon>Bacillati</taxon>
        <taxon>Bacillota</taxon>
        <taxon>Bacilli</taxon>
        <taxon>Bacillales</taxon>
        <taxon>Bacillaceae</taxon>
        <taxon>Bacillus</taxon>
        <taxon>Bacillus cereus group</taxon>
    </lineage>
</organism>
<proteinExistence type="inferred from homology"/>
<protein>
    <recommendedName>
        <fullName evidence="1">Phosphatidylglycerol--prolipoprotein diacylglyceryl transferase</fullName>
        <ecNumber evidence="1">2.5.1.145</ecNumber>
    </recommendedName>
</protein>
<comment type="function">
    <text evidence="1">Catalyzes the transfer of the diacylglyceryl group from phosphatidylglycerol to the sulfhydryl group of the N-terminal cysteine of a prolipoprotein, the first step in the formation of mature lipoproteins.</text>
</comment>
<comment type="catalytic activity">
    <reaction evidence="1">
        <text>L-cysteinyl-[prolipoprotein] + a 1,2-diacyl-sn-glycero-3-phospho-(1'-sn-glycerol) = an S-1,2-diacyl-sn-glyceryl-L-cysteinyl-[prolipoprotein] + sn-glycerol 1-phosphate + H(+)</text>
        <dbReference type="Rhea" id="RHEA:56712"/>
        <dbReference type="Rhea" id="RHEA-COMP:14679"/>
        <dbReference type="Rhea" id="RHEA-COMP:14680"/>
        <dbReference type="ChEBI" id="CHEBI:15378"/>
        <dbReference type="ChEBI" id="CHEBI:29950"/>
        <dbReference type="ChEBI" id="CHEBI:57685"/>
        <dbReference type="ChEBI" id="CHEBI:64716"/>
        <dbReference type="ChEBI" id="CHEBI:140658"/>
        <dbReference type="EC" id="2.5.1.145"/>
    </reaction>
</comment>
<comment type="pathway">
    <text evidence="1">Protein modification; lipoprotein biosynthesis (diacylglyceryl transfer).</text>
</comment>
<comment type="subcellular location">
    <subcellularLocation>
        <location evidence="1">Cell membrane</location>
        <topology evidence="1">Multi-pass membrane protein</topology>
    </subcellularLocation>
</comment>
<comment type="similarity">
    <text evidence="1">Belongs to the Lgt family.</text>
</comment>
<evidence type="ECO:0000255" key="1">
    <source>
        <dbReference type="HAMAP-Rule" id="MF_01147"/>
    </source>
</evidence>
<name>LGT_BACCN</name>
<sequence>MLLGSVPQLDRVAIHLGPFPVYWYGIIIGTGVLLGLWLATREGERLGIPKDTFVDLVLFAVPIAIICARAYYVAFEWEYYMQNPIQIINTRQGGLAIHGGLIGAVMTGIIYAKVKRISFWKLADIAAPSILLGQAIGRWGNFMNQEAHGGEVTRQFLEGLHLPDFIVNQMYIDGVYYHPTFLYESLWSFAGVILLLLLRKANLRRGELFFTYLIWYSIGRFFVEELRTDSLMLGPLRIAQVMSIGLIVISIIFIIVRRKTGQADKRYLEK</sequence>
<keyword id="KW-1003">Cell membrane</keyword>
<keyword id="KW-0472">Membrane</keyword>
<keyword id="KW-0808">Transferase</keyword>
<keyword id="KW-0812">Transmembrane</keyword>
<keyword id="KW-1133">Transmembrane helix</keyword>
<gene>
    <name evidence="1" type="primary">lgt</name>
    <name type="ordered locus">Bcer98_3705</name>
</gene>